<feature type="chain" id="PRO_0000140902" description="Thymidylate synthase">
    <location>
        <begin position="1"/>
        <end position="307"/>
    </location>
</feature>
<feature type="active site" description="Nucleophile" evidence="2">
    <location>
        <position position="189"/>
    </location>
</feature>
<feature type="binding site" description="in other chain" evidence="2">
    <location>
        <position position="44"/>
    </location>
    <ligand>
        <name>dUMP</name>
        <dbReference type="ChEBI" id="CHEBI:246422"/>
        <note>ligand shared between dimeric partners</note>
    </ligand>
</feature>
<feature type="binding site" evidence="3">
    <location>
        <begin position="169"/>
        <end position="170"/>
    </location>
    <ligand>
        <name>dUMP</name>
        <dbReference type="ChEBI" id="CHEBI:246422"/>
        <note>ligand shared between dimeric partners</note>
    </ligand>
</feature>
<feature type="binding site" description="in other chain" evidence="3">
    <location>
        <begin position="189"/>
        <end position="190"/>
    </location>
    <ligand>
        <name>dUMP</name>
        <dbReference type="ChEBI" id="CHEBI:246422"/>
        <note>ligand shared between dimeric partners</note>
    </ligand>
</feature>
<feature type="binding site" description="in other chain" evidence="3">
    <location>
        <begin position="209"/>
        <end position="212"/>
    </location>
    <ligand>
        <name>dUMP</name>
        <dbReference type="ChEBI" id="CHEBI:246422"/>
        <note>ligand shared between dimeric partners</note>
    </ligand>
</feature>
<feature type="binding site" evidence="2">
    <location>
        <position position="212"/>
    </location>
    <ligand>
        <name>(6R)-5,10-methylene-5,6,7,8-tetrahydrofolate</name>
        <dbReference type="ChEBI" id="CHEBI:15636"/>
    </ligand>
</feature>
<feature type="binding site" description="in other chain" evidence="2">
    <location>
        <position position="220"/>
    </location>
    <ligand>
        <name>dUMP</name>
        <dbReference type="ChEBI" id="CHEBI:246422"/>
        <note>ligand shared between dimeric partners</note>
    </ligand>
</feature>
<feature type="binding site" description="in other chain" evidence="3">
    <location>
        <begin position="250"/>
        <end position="252"/>
    </location>
    <ligand>
        <name>dUMP</name>
        <dbReference type="ChEBI" id="CHEBI:246422"/>
        <note>ligand shared between dimeric partners</note>
    </ligand>
</feature>
<feature type="binding site" evidence="2">
    <location>
        <position position="306"/>
    </location>
    <ligand>
        <name>(6R)-5,10-methylene-5,6,7,8-tetrahydrofolate</name>
        <dbReference type="ChEBI" id="CHEBI:15636"/>
    </ligand>
</feature>
<feature type="modified residue" description="Phosphoserine" evidence="1">
    <location>
        <position position="108"/>
    </location>
</feature>
<feature type="cross-link" description="Glycyl lysine isopeptide (Lys-Gly) (interchain with G-Cter in SUMO2)" evidence="1">
    <location>
        <position position="286"/>
    </location>
</feature>
<feature type="cross-link" description="Glycyl lysine isopeptide (Lys-Gly) (interchain with G-Cter in SUMO2)" evidence="1">
    <location>
        <position position="302"/>
    </location>
</feature>
<feature type="helix" evidence="7">
    <location>
        <begin position="24"/>
        <end position="37"/>
    </location>
</feature>
<feature type="strand" evidence="7">
    <location>
        <begin position="39"/>
        <end position="41"/>
    </location>
</feature>
<feature type="strand" evidence="6">
    <location>
        <begin position="44"/>
        <end position="47"/>
    </location>
</feature>
<feature type="strand" evidence="7">
    <location>
        <begin position="49"/>
        <end position="60"/>
    </location>
</feature>
<feature type="strand" evidence="7">
    <location>
        <begin position="62"/>
        <end position="64"/>
    </location>
</feature>
<feature type="strand" evidence="7">
    <location>
        <begin position="69"/>
        <end position="71"/>
    </location>
</feature>
<feature type="helix" evidence="7">
    <location>
        <begin position="75"/>
        <end position="86"/>
    </location>
</feature>
<feature type="helix" evidence="7">
    <location>
        <begin position="92"/>
        <end position="96"/>
    </location>
</feature>
<feature type="turn" evidence="7">
    <location>
        <begin position="97"/>
        <end position="99"/>
    </location>
</feature>
<feature type="turn" evidence="7">
    <location>
        <begin position="102"/>
        <end position="107"/>
    </location>
</feature>
<feature type="helix" evidence="7">
    <location>
        <begin position="109"/>
        <end position="114"/>
    </location>
</feature>
<feature type="strand" evidence="8">
    <location>
        <begin position="118"/>
        <end position="120"/>
    </location>
</feature>
<feature type="helix" evidence="7">
    <location>
        <begin position="129"/>
        <end position="135"/>
    </location>
</feature>
<feature type="helix" evidence="7">
    <location>
        <begin position="154"/>
        <end position="164"/>
    </location>
</feature>
<feature type="strand" evidence="7">
    <location>
        <begin position="172"/>
        <end position="174"/>
    </location>
</feature>
<feature type="turn" evidence="7">
    <location>
        <begin position="178"/>
        <end position="180"/>
    </location>
</feature>
<feature type="helix" evidence="7">
    <location>
        <begin position="181"/>
        <end position="183"/>
    </location>
</feature>
<feature type="strand" evidence="5">
    <location>
        <begin position="184"/>
        <end position="186"/>
    </location>
</feature>
<feature type="strand" evidence="7">
    <location>
        <begin position="189"/>
        <end position="198"/>
    </location>
</feature>
<feature type="strand" evidence="7">
    <location>
        <begin position="201"/>
        <end position="212"/>
    </location>
</feature>
<feature type="turn" evidence="7">
    <location>
        <begin position="213"/>
        <end position="215"/>
    </location>
</feature>
<feature type="helix" evidence="7">
    <location>
        <begin position="216"/>
        <end position="235"/>
    </location>
</feature>
<feature type="strand" evidence="7">
    <location>
        <begin position="238"/>
        <end position="252"/>
    </location>
</feature>
<feature type="helix" evidence="7">
    <location>
        <begin position="253"/>
        <end position="255"/>
    </location>
</feature>
<feature type="helix" evidence="7">
    <location>
        <begin position="256"/>
        <end position="263"/>
    </location>
</feature>
<feature type="strand" evidence="7">
    <location>
        <begin position="272"/>
        <end position="275"/>
    </location>
</feature>
<feature type="helix" evidence="7">
    <location>
        <begin position="282"/>
        <end position="284"/>
    </location>
</feature>
<feature type="helix" evidence="7">
    <location>
        <begin position="287"/>
        <end position="289"/>
    </location>
</feature>
<feature type="strand" evidence="7">
    <location>
        <begin position="290"/>
        <end position="294"/>
    </location>
</feature>
<keyword id="KW-0002">3D-structure</keyword>
<keyword id="KW-0963">Cytoplasm</keyword>
<keyword id="KW-1017">Isopeptide bond</keyword>
<keyword id="KW-0472">Membrane</keyword>
<keyword id="KW-0489">Methyltransferase</keyword>
<keyword id="KW-0496">Mitochondrion</keyword>
<keyword id="KW-0999">Mitochondrion inner membrane</keyword>
<keyword id="KW-0545">Nucleotide biosynthesis</keyword>
<keyword id="KW-0539">Nucleus</keyword>
<keyword id="KW-0597">Phosphoprotein</keyword>
<keyword id="KW-1185">Reference proteome</keyword>
<keyword id="KW-0808">Transferase</keyword>
<keyword id="KW-0832">Ubl conjugation</keyword>
<comment type="function">
    <text evidence="1">Catalyzes the reductive methylation of 2'-deoxyuridine 5'-monophosphate (dUMP) to thymidine 5'-monophosphate (dTMP), using the cosubstrate, 5,10- methylenetetrahydrofolate (CH2H4folate) as a 1-carbon donor and reductant and contributes to the de novo mitochondrial thymidylate biosynthesis pathway.</text>
</comment>
<comment type="catalytic activity">
    <reaction evidence="3">
        <text>dUMP + (6R)-5,10-methylene-5,6,7,8-tetrahydrofolate = 7,8-dihydrofolate + dTMP</text>
        <dbReference type="Rhea" id="RHEA:12104"/>
        <dbReference type="ChEBI" id="CHEBI:15636"/>
        <dbReference type="ChEBI" id="CHEBI:57451"/>
        <dbReference type="ChEBI" id="CHEBI:63528"/>
        <dbReference type="ChEBI" id="CHEBI:246422"/>
        <dbReference type="EC" id="2.1.1.45"/>
    </reaction>
    <physiologicalReaction direction="left-to-right" evidence="3">
        <dbReference type="Rhea" id="RHEA:12105"/>
    </physiologicalReaction>
</comment>
<comment type="pathway">
    <text evidence="3">Pyrimidine metabolism; dTTP biosynthesis.</text>
</comment>
<comment type="subunit">
    <text evidence="3">Homodimer.</text>
</comment>
<comment type="subcellular location">
    <subcellularLocation>
        <location evidence="1">Nucleus</location>
    </subcellularLocation>
    <subcellularLocation>
        <location evidence="1">Cytoplasm</location>
    </subcellularLocation>
    <subcellularLocation>
        <location evidence="1">Mitochondrion</location>
    </subcellularLocation>
    <subcellularLocation>
        <location evidence="1">Mitochondrion matrix</location>
    </subcellularLocation>
    <subcellularLocation>
        <location evidence="1">Mitochondrion inner membrane</location>
    </subcellularLocation>
</comment>
<comment type="similarity">
    <text evidence="4">Belongs to the thymidylate synthase family.</text>
</comment>
<organism>
    <name type="scientific">Mus musculus</name>
    <name type="common">Mouse</name>
    <dbReference type="NCBI Taxonomy" id="10090"/>
    <lineage>
        <taxon>Eukaryota</taxon>
        <taxon>Metazoa</taxon>
        <taxon>Chordata</taxon>
        <taxon>Craniata</taxon>
        <taxon>Vertebrata</taxon>
        <taxon>Euteleostomi</taxon>
        <taxon>Mammalia</taxon>
        <taxon>Eutheria</taxon>
        <taxon>Euarchontoglires</taxon>
        <taxon>Glires</taxon>
        <taxon>Rodentia</taxon>
        <taxon>Myomorpha</taxon>
        <taxon>Muroidea</taxon>
        <taxon>Muridae</taxon>
        <taxon>Murinae</taxon>
        <taxon>Mus</taxon>
        <taxon>Mus</taxon>
    </lineage>
</organism>
<accession>P07607</accession>
<sequence length="307" mass="34958">MLVVGSELQSDAQQLSAEAPRHGELQYLRQVEHILRCGFKKEDRTGTGTLSVFGMQARYSLRDEFPLLTTKRVFWKGVLEELLWFIKGSTNAKELSSKGVRIWDANGSRDFLDSLGFSARQEGDLGPVYGFQWRHFGAEYKDMDSDYSGQGVDQLQKVIDTIKTNPDDRRIIMCAWNPKDLPLMALPPCHALCQFYVVNGELSCQLYQRSGDMGLGVPFNIASYALLTYMIAHITGLQPGDFVHTLGDAHIYLNHIEPLKIQLQREPRPFPKLKILRKVETIDDFKVEDFQIEGYNPHPTIKMEMAV</sequence>
<evidence type="ECO:0000250" key="1">
    <source>
        <dbReference type="UniProtKB" id="P04818"/>
    </source>
</evidence>
<evidence type="ECO:0000250" key="2">
    <source>
        <dbReference type="UniProtKB" id="P0A884"/>
    </source>
</evidence>
<evidence type="ECO:0000250" key="3">
    <source>
        <dbReference type="UniProtKB" id="P45352"/>
    </source>
</evidence>
<evidence type="ECO:0000305" key="4"/>
<evidence type="ECO:0007829" key="5">
    <source>
        <dbReference type="PDB" id="4E5O"/>
    </source>
</evidence>
<evidence type="ECO:0007829" key="6">
    <source>
        <dbReference type="PDB" id="4EIN"/>
    </source>
</evidence>
<evidence type="ECO:0007829" key="7">
    <source>
        <dbReference type="PDB" id="4EZ8"/>
    </source>
</evidence>
<evidence type="ECO:0007829" key="8">
    <source>
        <dbReference type="PDB" id="6Y08"/>
    </source>
</evidence>
<name>TYSY_MOUSE</name>
<reference key="1">
    <citation type="journal article" date="1986" name="Mol. Biol. Evol.">
        <title>Sequence of a cDNA for mouse thymidylate synthase reveals striking similarity with the prokaryotic enzyme.</title>
        <authorList>
            <person name="Perryman S.M."/>
            <person name="Rossana C."/>
            <person name="Deng T."/>
            <person name="Vanin E.F."/>
            <person name="Johnson L.F."/>
        </authorList>
    </citation>
    <scope>NUCLEOTIDE SEQUENCE [MRNA]</scope>
</reference>
<reference key="2">
    <citation type="journal article" date="1986" name="J. Biol. Chem.">
        <title>Structure of the gene for mouse thymidylate synthase. Locations of introns and multiple transcriptional start sites.</title>
        <authorList>
            <person name="Deng T."/>
            <person name="Li D."/>
            <person name="Jenh C.-H."/>
            <person name="Johnson L.F."/>
        </authorList>
    </citation>
    <scope>NUCLEOTIDE SEQUENCE [GENOMIC DNA]</scope>
</reference>
<reference key="3">
    <citation type="journal article" date="1989" name="Nucleic Acids Res.">
        <title>Thymidylate synthase gene expression is stimulated by some (but not all) introns.</title>
        <authorList>
            <person name="Deng T."/>
            <person name="Li Y."/>
            <person name="Johnson L.F."/>
        </authorList>
    </citation>
    <scope>NUCLEOTIDE SEQUENCE OF 236-265</scope>
</reference>
<reference key="4">
    <citation type="journal article" date="2010" name="Cell">
        <title>A tissue-specific atlas of mouse protein phosphorylation and expression.</title>
        <authorList>
            <person name="Huttlin E.L."/>
            <person name="Jedrychowski M.P."/>
            <person name="Elias J.E."/>
            <person name="Goswami T."/>
            <person name="Rad R."/>
            <person name="Beausoleil S.A."/>
            <person name="Villen J."/>
            <person name="Haas W."/>
            <person name="Sowa M.E."/>
            <person name="Gygi S.P."/>
        </authorList>
    </citation>
    <scope>IDENTIFICATION BY MASS SPECTROMETRY [LARGE SCALE ANALYSIS]</scope>
    <source>
        <tissue>Kidney</tissue>
        <tissue>Spleen</tissue>
    </source>
</reference>
<dbReference type="EC" id="2.1.1.45" evidence="1"/>
<dbReference type="EMBL" id="M13019">
    <property type="protein sequence ID" value="AAA40439.1"/>
    <property type="molecule type" value="mRNA"/>
</dbReference>
<dbReference type="EMBL" id="M13352">
    <property type="protein sequence ID" value="AAA40444.1"/>
    <property type="molecule type" value="Genomic_DNA"/>
</dbReference>
<dbReference type="EMBL" id="J02617">
    <property type="protein sequence ID" value="AAA40444.1"/>
    <property type="status" value="JOINED"/>
    <property type="molecule type" value="Genomic_DNA"/>
</dbReference>
<dbReference type="EMBL" id="M13347">
    <property type="protein sequence ID" value="AAA40444.1"/>
    <property type="status" value="JOINED"/>
    <property type="molecule type" value="Genomic_DNA"/>
</dbReference>
<dbReference type="EMBL" id="M13348">
    <property type="protein sequence ID" value="AAA40444.1"/>
    <property type="status" value="JOINED"/>
    <property type="molecule type" value="Genomic_DNA"/>
</dbReference>
<dbReference type="EMBL" id="M13349">
    <property type="protein sequence ID" value="AAA40444.1"/>
    <property type="status" value="JOINED"/>
    <property type="molecule type" value="Genomic_DNA"/>
</dbReference>
<dbReference type="EMBL" id="M13350">
    <property type="protein sequence ID" value="AAA40444.1"/>
    <property type="status" value="JOINED"/>
    <property type="molecule type" value="Genomic_DNA"/>
</dbReference>
<dbReference type="EMBL" id="M13351">
    <property type="protein sequence ID" value="AAA40444.1"/>
    <property type="status" value="JOINED"/>
    <property type="molecule type" value="Genomic_DNA"/>
</dbReference>
<dbReference type="EMBL" id="X14489">
    <property type="protein sequence ID" value="CAA32651.1"/>
    <property type="molecule type" value="mRNA"/>
</dbReference>
<dbReference type="CCDS" id="CCDS19154.1"/>
<dbReference type="PIR" id="A26323">
    <property type="entry name" value="YXMST"/>
</dbReference>
<dbReference type="RefSeq" id="NP_067263.1">
    <property type="nucleotide sequence ID" value="NM_021288.4"/>
</dbReference>
<dbReference type="PDB" id="3IHI">
    <property type="method" value="X-ray"/>
    <property type="resolution" value="1.94 A"/>
    <property type="chains" value="A/B=1-307"/>
</dbReference>
<dbReference type="PDB" id="4E5O">
    <property type="method" value="X-ray"/>
    <property type="resolution" value="1.70 A"/>
    <property type="chains" value="A/B/C/D/E/F=1-307"/>
</dbReference>
<dbReference type="PDB" id="4EB4">
    <property type="method" value="X-ray"/>
    <property type="resolution" value="1.74 A"/>
    <property type="chains" value="A/B/C/D=1-307"/>
</dbReference>
<dbReference type="PDB" id="4EIN">
    <property type="method" value="X-ray"/>
    <property type="resolution" value="1.75 A"/>
    <property type="chains" value="A/B=1-307"/>
</dbReference>
<dbReference type="PDB" id="4EZ8">
    <property type="method" value="X-ray"/>
    <property type="resolution" value="1.17 A"/>
    <property type="chains" value="A=1-307"/>
</dbReference>
<dbReference type="PDB" id="5FCT">
    <property type="method" value="X-ray"/>
    <property type="resolution" value="1.55 A"/>
    <property type="chains" value="A/B=1-307"/>
</dbReference>
<dbReference type="PDB" id="6F6Z">
    <property type="method" value="X-ray"/>
    <property type="resolution" value="2.13 A"/>
    <property type="chains" value="A/B=1-307"/>
</dbReference>
<dbReference type="PDB" id="6GKO">
    <property type="method" value="X-ray"/>
    <property type="resolution" value="1.84 A"/>
    <property type="chains" value="A/B=1-307"/>
</dbReference>
<dbReference type="PDB" id="6GYJ">
    <property type="method" value="X-ray"/>
    <property type="resolution" value="1.75 A"/>
    <property type="chains" value="A/B=1-307"/>
</dbReference>
<dbReference type="PDB" id="6Y08">
    <property type="method" value="X-ray"/>
    <property type="resolution" value="2.30 A"/>
    <property type="chains" value="A/B=1-307"/>
</dbReference>
<dbReference type="PDBsum" id="3IHI"/>
<dbReference type="PDBsum" id="4E5O"/>
<dbReference type="PDBsum" id="4EB4"/>
<dbReference type="PDBsum" id="4EIN"/>
<dbReference type="PDBsum" id="4EZ8"/>
<dbReference type="PDBsum" id="5FCT"/>
<dbReference type="PDBsum" id="6F6Z"/>
<dbReference type="PDBsum" id="6GKO"/>
<dbReference type="PDBsum" id="6GYJ"/>
<dbReference type="PDBsum" id="6Y08"/>
<dbReference type="SMR" id="P07607"/>
<dbReference type="BioGRID" id="204392">
    <property type="interactions" value="3"/>
</dbReference>
<dbReference type="FunCoup" id="P07607">
    <property type="interactions" value="2864"/>
</dbReference>
<dbReference type="STRING" id="10090.ENSMUSP00000026846"/>
<dbReference type="BindingDB" id="P07607"/>
<dbReference type="ChEMBL" id="CHEMBL3160"/>
<dbReference type="DrugCentral" id="P07607"/>
<dbReference type="GuidetoPHARMACOLOGY" id="2642"/>
<dbReference type="GlyGen" id="P07607">
    <property type="glycosylation" value="1 site, 1 O-linked glycan (1 site)"/>
</dbReference>
<dbReference type="iPTMnet" id="P07607"/>
<dbReference type="PhosphoSitePlus" id="P07607"/>
<dbReference type="REPRODUCTION-2DPAGE" id="P07607"/>
<dbReference type="jPOST" id="P07607"/>
<dbReference type="PaxDb" id="10090-ENSMUSP00000026846"/>
<dbReference type="PeptideAtlas" id="P07607"/>
<dbReference type="ProteomicsDB" id="298158"/>
<dbReference type="Pumba" id="P07607"/>
<dbReference type="Antibodypedia" id="3461">
    <property type="antibodies" value="1270 antibodies from 42 providers"/>
</dbReference>
<dbReference type="DNASU" id="22171"/>
<dbReference type="Ensembl" id="ENSMUST00000026846.11">
    <property type="protein sequence ID" value="ENSMUSP00000026846.7"/>
    <property type="gene ID" value="ENSMUSG00000025747.13"/>
</dbReference>
<dbReference type="GeneID" id="22171"/>
<dbReference type="KEGG" id="mmu:22171"/>
<dbReference type="UCSC" id="uc008wux.2">
    <property type="organism name" value="mouse"/>
</dbReference>
<dbReference type="AGR" id="MGI:98878"/>
<dbReference type="CTD" id="7298"/>
<dbReference type="MGI" id="MGI:98878">
    <property type="gene designation" value="Tyms"/>
</dbReference>
<dbReference type="VEuPathDB" id="HostDB:ENSMUSG00000025747"/>
<dbReference type="eggNOG" id="KOG0673">
    <property type="taxonomic scope" value="Eukaryota"/>
</dbReference>
<dbReference type="GeneTree" id="ENSGT00390000014786"/>
<dbReference type="HOGENOM" id="CLU_021669_0_2_1"/>
<dbReference type="InParanoid" id="P07607"/>
<dbReference type="OMA" id="AYGRFWR"/>
<dbReference type="OrthoDB" id="766at2759"/>
<dbReference type="PhylomeDB" id="P07607"/>
<dbReference type="TreeFam" id="TF353027"/>
<dbReference type="BRENDA" id="2.1.1.45">
    <property type="organism ID" value="3474"/>
</dbReference>
<dbReference type="Reactome" id="R-MMU-499943">
    <property type="pathway name" value="Interconversion of nucleotide di- and triphosphates"/>
</dbReference>
<dbReference type="UniPathway" id="UPA00575"/>
<dbReference type="BioGRID-ORCS" id="22171">
    <property type="hits" value="25 hits in 77 CRISPR screens"/>
</dbReference>
<dbReference type="ChiTaRS" id="Tyms">
    <property type="organism name" value="mouse"/>
</dbReference>
<dbReference type="EvolutionaryTrace" id="P07607"/>
<dbReference type="PRO" id="PR:P07607"/>
<dbReference type="Proteomes" id="UP000000589">
    <property type="component" value="Chromosome 5"/>
</dbReference>
<dbReference type="RNAct" id="P07607">
    <property type="molecule type" value="protein"/>
</dbReference>
<dbReference type="Bgee" id="ENSMUSG00000025747">
    <property type="expression patterns" value="Expressed in blastoderm cell in morula and 172 other cell types or tissues"/>
</dbReference>
<dbReference type="ExpressionAtlas" id="P07607">
    <property type="expression patterns" value="baseline and differential"/>
</dbReference>
<dbReference type="GO" id="GO:0005737">
    <property type="term" value="C:cytoplasm"/>
    <property type="evidence" value="ECO:0000250"/>
    <property type="project" value="UniProtKB"/>
</dbReference>
<dbReference type="GO" id="GO:0005743">
    <property type="term" value="C:mitochondrial inner membrane"/>
    <property type="evidence" value="ECO:0000250"/>
    <property type="project" value="UniProtKB"/>
</dbReference>
<dbReference type="GO" id="GO:0005759">
    <property type="term" value="C:mitochondrial matrix"/>
    <property type="evidence" value="ECO:0000250"/>
    <property type="project" value="UniProtKB"/>
</dbReference>
<dbReference type="GO" id="GO:0005739">
    <property type="term" value="C:mitochondrion"/>
    <property type="evidence" value="ECO:0000250"/>
    <property type="project" value="UniProtKB"/>
</dbReference>
<dbReference type="GO" id="GO:0005634">
    <property type="term" value="C:nucleus"/>
    <property type="evidence" value="ECO:0000314"/>
    <property type="project" value="MGI"/>
</dbReference>
<dbReference type="GO" id="GO:0000900">
    <property type="term" value="F:mRNA regulatory element binding translation repressor activity"/>
    <property type="evidence" value="ECO:0007669"/>
    <property type="project" value="Ensembl"/>
</dbReference>
<dbReference type="GO" id="GO:1990825">
    <property type="term" value="F:sequence-specific mRNA binding"/>
    <property type="evidence" value="ECO:0007669"/>
    <property type="project" value="Ensembl"/>
</dbReference>
<dbReference type="GO" id="GO:0004799">
    <property type="term" value="F:thymidylate synthase activity"/>
    <property type="evidence" value="ECO:0000314"/>
    <property type="project" value="MGI"/>
</dbReference>
<dbReference type="GO" id="GO:0006231">
    <property type="term" value="P:dTMP biosynthetic process"/>
    <property type="evidence" value="ECO:0000314"/>
    <property type="project" value="MGI"/>
</dbReference>
<dbReference type="GO" id="GO:0006235">
    <property type="term" value="P:dTTP biosynthetic process"/>
    <property type="evidence" value="ECO:0007669"/>
    <property type="project" value="UniProtKB-UniPathway"/>
</dbReference>
<dbReference type="GO" id="GO:0032259">
    <property type="term" value="P:methylation"/>
    <property type="evidence" value="ECO:0007669"/>
    <property type="project" value="UniProtKB-KW"/>
</dbReference>
<dbReference type="GO" id="GO:0035999">
    <property type="term" value="P:tetrahydrofolate interconversion"/>
    <property type="evidence" value="ECO:0000314"/>
    <property type="project" value="MGI"/>
</dbReference>
<dbReference type="CDD" id="cd00351">
    <property type="entry name" value="TS_Pyrimidine_HMase"/>
    <property type="match status" value="1"/>
</dbReference>
<dbReference type="FunFam" id="3.30.572.10:FF:000007">
    <property type="entry name" value="thymidylate synthase isoform X2"/>
    <property type="match status" value="1"/>
</dbReference>
<dbReference type="Gene3D" id="3.30.572.10">
    <property type="entry name" value="Thymidylate synthase/dCMP hydroxymethylase domain"/>
    <property type="match status" value="1"/>
</dbReference>
<dbReference type="HAMAP" id="MF_00008">
    <property type="entry name" value="Thymidy_synth_bact"/>
    <property type="match status" value="1"/>
</dbReference>
<dbReference type="InterPro" id="IPR045097">
    <property type="entry name" value="Thymidate_synth/dCMP_Mease"/>
</dbReference>
<dbReference type="InterPro" id="IPR023451">
    <property type="entry name" value="Thymidate_synth/dCMP_Mease_dom"/>
</dbReference>
<dbReference type="InterPro" id="IPR036926">
    <property type="entry name" value="Thymidate_synth/dCMP_Mease_sf"/>
</dbReference>
<dbReference type="InterPro" id="IPR000398">
    <property type="entry name" value="Thymidylate_synthase"/>
</dbReference>
<dbReference type="InterPro" id="IPR020940">
    <property type="entry name" value="Thymidylate_synthase_AS"/>
</dbReference>
<dbReference type="NCBIfam" id="NF002497">
    <property type="entry name" value="PRK01827.1-3"/>
    <property type="match status" value="1"/>
</dbReference>
<dbReference type="NCBIfam" id="TIGR03284">
    <property type="entry name" value="thym_sym"/>
    <property type="match status" value="1"/>
</dbReference>
<dbReference type="PANTHER" id="PTHR11548:SF2">
    <property type="entry name" value="THYMIDYLATE SYNTHASE"/>
    <property type="match status" value="1"/>
</dbReference>
<dbReference type="PANTHER" id="PTHR11548">
    <property type="entry name" value="THYMIDYLATE SYNTHASE 1"/>
    <property type="match status" value="1"/>
</dbReference>
<dbReference type="Pfam" id="PF00303">
    <property type="entry name" value="Thymidylat_synt"/>
    <property type="match status" value="1"/>
</dbReference>
<dbReference type="PRINTS" id="PR00108">
    <property type="entry name" value="THYMDSNTHASE"/>
</dbReference>
<dbReference type="SUPFAM" id="SSF55831">
    <property type="entry name" value="Thymidylate synthase/dCMP hydroxymethylase"/>
    <property type="match status" value="1"/>
</dbReference>
<dbReference type="PROSITE" id="PS00091">
    <property type="entry name" value="THYMIDYLATE_SYNTHASE"/>
    <property type="match status" value="1"/>
</dbReference>
<protein>
    <recommendedName>
        <fullName>Thymidylate synthase</fullName>
        <shortName>TS</shortName>
        <shortName>TSase</shortName>
        <ecNumber evidence="1">2.1.1.45</ecNumber>
    </recommendedName>
</protein>
<gene>
    <name type="primary">Tyms</name>
</gene>
<proteinExistence type="evidence at protein level"/>